<sequence>MASITGQLSPMYINNVNTRSAYQPYIPVLERFDPRDLEVPKGVFVPLSGAMYFPTVHGMSLPQRRPLGLVQTGGLMSEPMTVDVVPGKLYTVLNTGCDTLRVGDHFMVQFPQPEDTDAQLRASKKPGTRRICNAASFNRMLPLWGGFMAVKKIDPIVPRELMHQLTRDVVTARSSELLYGLAGVYDLVEKTSAAARGVFKDIAEKKAVTKEEVVAAMTADQVDIFRKIVDEFSTMLNCVNFATIGMYHSSTLANPTPSLSQNQVWCNTDGVTEPGLQFHAFIKQFSGV</sequence>
<proteinExistence type="predicted"/>
<reference key="1">
    <citation type="journal article" date="1992" name="Virology">
        <title>Channel catfish virus: a new type of herpesvirus.</title>
        <authorList>
            <person name="Davison A.J."/>
        </authorList>
    </citation>
    <scope>NUCLEOTIDE SEQUENCE [LARGE SCALE GENOMIC DNA]</scope>
</reference>
<organismHost>
    <name type="scientific">Ictaluridae</name>
    <name type="common">bullhead catfishes</name>
    <dbReference type="NCBI Taxonomy" id="7996"/>
</organismHost>
<feature type="chain" id="PRO_0000222109" description="Uncharacterized protein ORF27">
    <location>
        <begin position="1"/>
        <end position="288"/>
    </location>
</feature>
<gene>
    <name type="primary">ORF27</name>
</gene>
<organism>
    <name type="scientific">Ictalurid herpesvirus 1 (strain Auburn)</name>
    <name type="common">IcHV-1</name>
    <name type="synonym">Channel catfish herpesvirus</name>
    <dbReference type="NCBI Taxonomy" id="766178"/>
    <lineage>
        <taxon>Viruses</taxon>
        <taxon>Duplodnaviria</taxon>
        <taxon>Heunggongvirae</taxon>
        <taxon>Peploviricota</taxon>
        <taxon>Herviviricetes</taxon>
        <taxon>Herpesvirales</taxon>
        <taxon>Alloherpesviridae</taxon>
        <taxon>Ictavirus</taxon>
        <taxon>Ictavirus ictaluridallo1</taxon>
        <taxon>Ictalurid herpesvirus 1</taxon>
    </lineage>
</organism>
<name>VG27_ICHVA</name>
<accession>Q00113</accession>
<protein>
    <recommendedName>
        <fullName>Uncharacterized protein ORF27</fullName>
    </recommendedName>
</protein>
<keyword id="KW-1185">Reference proteome</keyword>
<dbReference type="EMBL" id="M75136">
    <property type="protein sequence ID" value="AAA88130.1"/>
    <property type="molecule type" value="Genomic_DNA"/>
</dbReference>
<dbReference type="PIR" id="A36789">
    <property type="entry name" value="A36789"/>
</dbReference>
<dbReference type="RefSeq" id="NP_041118.1">
    <property type="nucleotide sequence ID" value="NC_001493.2"/>
</dbReference>
<dbReference type="GeneID" id="1488416"/>
<dbReference type="KEGG" id="vg:1488416"/>
<dbReference type="Proteomes" id="UP000007643">
    <property type="component" value="Segment"/>
</dbReference>